<name>MIAA_THEFY</name>
<comment type="function">
    <text evidence="1">Catalyzes the transfer of a dimethylallyl group onto the adenine at position 37 in tRNAs that read codons beginning with uridine, leading to the formation of N6-(dimethylallyl)adenosine (i(6)A).</text>
</comment>
<comment type="catalytic activity">
    <reaction evidence="1">
        <text>adenosine(37) in tRNA + dimethylallyl diphosphate = N(6)-dimethylallyladenosine(37) in tRNA + diphosphate</text>
        <dbReference type="Rhea" id="RHEA:26482"/>
        <dbReference type="Rhea" id="RHEA-COMP:10162"/>
        <dbReference type="Rhea" id="RHEA-COMP:10375"/>
        <dbReference type="ChEBI" id="CHEBI:33019"/>
        <dbReference type="ChEBI" id="CHEBI:57623"/>
        <dbReference type="ChEBI" id="CHEBI:74411"/>
        <dbReference type="ChEBI" id="CHEBI:74415"/>
        <dbReference type="EC" id="2.5.1.75"/>
    </reaction>
</comment>
<comment type="cofactor">
    <cofactor evidence="1">
        <name>Mg(2+)</name>
        <dbReference type="ChEBI" id="CHEBI:18420"/>
    </cofactor>
</comment>
<comment type="subunit">
    <text evidence="1">Monomer.</text>
</comment>
<comment type="similarity">
    <text evidence="1">Belongs to the IPP transferase family.</text>
</comment>
<reference key="1">
    <citation type="journal article" date="2007" name="J. Bacteriol.">
        <title>Genome sequence and analysis of the soil cellulolytic actinomycete Thermobifida fusca YX.</title>
        <authorList>
            <person name="Lykidis A."/>
            <person name="Mavromatis K."/>
            <person name="Ivanova N."/>
            <person name="Anderson I."/>
            <person name="Land M."/>
            <person name="DiBartolo G."/>
            <person name="Martinez M."/>
            <person name="Lapidus A."/>
            <person name="Lucas S."/>
            <person name="Copeland A."/>
            <person name="Richardson P."/>
            <person name="Wilson D.B."/>
            <person name="Kyrpides N."/>
        </authorList>
    </citation>
    <scope>NUCLEOTIDE SEQUENCE [LARGE SCALE GENOMIC DNA]</scope>
    <source>
        <strain>YX</strain>
    </source>
</reference>
<dbReference type="EC" id="2.5.1.75" evidence="1"/>
<dbReference type="EMBL" id="CP000088">
    <property type="protein sequence ID" value="AAZ54853.1"/>
    <property type="molecule type" value="Genomic_DNA"/>
</dbReference>
<dbReference type="RefSeq" id="WP_011291262.1">
    <property type="nucleotide sequence ID" value="NC_007333.1"/>
</dbReference>
<dbReference type="SMR" id="Q47RR4"/>
<dbReference type="STRING" id="269800.Tfu_0815"/>
<dbReference type="KEGG" id="tfu:Tfu_0815"/>
<dbReference type="eggNOG" id="COG0324">
    <property type="taxonomic scope" value="Bacteria"/>
</dbReference>
<dbReference type="HOGENOM" id="CLU_032616_0_1_11"/>
<dbReference type="OrthoDB" id="9776390at2"/>
<dbReference type="GO" id="GO:0005524">
    <property type="term" value="F:ATP binding"/>
    <property type="evidence" value="ECO:0007669"/>
    <property type="project" value="UniProtKB-UniRule"/>
</dbReference>
<dbReference type="GO" id="GO:0052381">
    <property type="term" value="F:tRNA dimethylallyltransferase activity"/>
    <property type="evidence" value="ECO:0007669"/>
    <property type="project" value="UniProtKB-UniRule"/>
</dbReference>
<dbReference type="GO" id="GO:0006400">
    <property type="term" value="P:tRNA modification"/>
    <property type="evidence" value="ECO:0007669"/>
    <property type="project" value="TreeGrafter"/>
</dbReference>
<dbReference type="FunFam" id="1.10.20.140:FF:000001">
    <property type="entry name" value="tRNA dimethylallyltransferase"/>
    <property type="match status" value="1"/>
</dbReference>
<dbReference type="Gene3D" id="1.10.20.140">
    <property type="match status" value="1"/>
</dbReference>
<dbReference type="Gene3D" id="3.40.50.300">
    <property type="entry name" value="P-loop containing nucleotide triphosphate hydrolases"/>
    <property type="match status" value="1"/>
</dbReference>
<dbReference type="HAMAP" id="MF_00185">
    <property type="entry name" value="IPP_trans"/>
    <property type="match status" value="1"/>
</dbReference>
<dbReference type="InterPro" id="IPR039657">
    <property type="entry name" value="Dimethylallyltransferase"/>
</dbReference>
<dbReference type="InterPro" id="IPR018022">
    <property type="entry name" value="IPT"/>
</dbReference>
<dbReference type="InterPro" id="IPR027417">
    <property type="entry name" value="P-loop_NTPase"/>
</dbReference>
<dbReference type="NCBIfam" id="TIGR00174">
    <property type="entry name" value="miaA"/>
    <property type="match status" value="1"/>
</dbReference>
<dbReference type="PANTHER" id="PTHR11088">
    <property type="entry name" value="TRNA DIMETHYLALLYLTRANSFERASE"/>
    <property type="match status" value="1"/>
</dbReference>
<dbReference type="PANTHER" id="PTHR11088:SF60">
    <property type="entry name" value="TRNA DIMETHYLALLYLTRANSFERASE"/>
    <property type="match status" value="1"/>
</dbReference>
<dbReference type="Pfam" id="PF01715">
    <property type="entry name" value="IPPT"/>
    <property type="match status" value="1"/>
</dbReference>
<dbReference type="SUPFAM" id="SSF52540">
    <property type="entry name" value="P-loop containing nucleoside triphosphate hydrolases"/>
    <property type="match status" value="1"/>
</dbReference>
<proteinExistence type="inferred from homology"/>
<feature type="chain" id="PRO_0000377353" description="tRNA dimethylallyltransferase">
    <location>
        <begin position="1"/>
        <end position="319"/>
    </location>
</feature>
<feature type="region of interest" description="Interaction with substrate tRNA" evidence="1">
    <location>
        <begin position="39"/>
        <end position="42"/>
    </location>
</feature>
<feature type="binding site" evidence="1">
    <location>
        <begin position="9"/>
        <end position="16"/>
    </location>
    <ligand>
        <name>ATP</name>
        <dbReference type="ChEBI" id="CHEBI:30616"/>
    </ligand>
</feature>
<feature type="binding site" evidence="1">
    <location>
        <begin position="11"/>
        <end position="16"/>
    </location>
    <ligand>
        <name>substrate</name>
    </ligand>
</feature>
<feature type="site" description="Interaction with substrate tRNA" evidence="1">
    <location>
        <position position="105"/>
    </location>
</feature>
<feature type="site" description="Interaction with substrate tRNA" evidence="1">
    <location>
        <position position="126"/>
    </location>
</feature>
<protein>
    <recommendedName>
        <fullName evidence="1">tRNA dimethylallyltransferase</fullName>
        <ecNumber evidence="1">2.5.1.75</ecNumber>
    </recommendedName>
    <alternativeName>
        <fullName evidence="1">Dimethylallyl diphosphate:tRNA dimethylallyltransferase</fullName>
        <shortName evidence="1">DMAPP:tRNA dimethylallyltransferase</shortName>
        <shortName evidence="1">DMATase</shortName>
    </alternativeName>
    <alternativeName>
        <fullName evidence="1">Isopentenyl-diphosphate:tRNA isopentenyltransferase</fullName>
        <shortName evidence="1">IPP transferase</shortName>
        <shortName evidence="1">IPPT</shortName>
        <shortName evidence="1">IPTase</shortName>
    </alternativeName>
</protein>
<sequence length="319" mass="35295">MSTVIAVVGPTAVGKSDLSVALALRLTEHGLPAEIINADSMQLYQGMDIGTAKLTPEERRGVPHHLLDVWEVTQTANVADYQRMARAVIDDLHAAGRVPVLVGGSGLYVRAALDELDFPGTDPKVRARLEAELAEQGPLALHARLARLDPEAARAILPTNGRRIVRALEVIEITGGPFTATLPDHVSRYPCVQIGLTAPRPELDERIALRVDRMWEAGLVDEVRALEKAGLRDGFTASRALGYAQILRFLAGECTEEEAKEETVRATRRFARRQESWFRRDPRVHWLPYDAPDLVDRAFALVCEHSDLCFRSATRDEQS</sequence>
<accession>Q47RR4</accession>
<gene>
    <name evidence="1" type="primary">miaA</name>
    <name type="ordered locus">Tfu_0815</name>
</gene>
<organism>
    <name type="scientific">Thermobifida fusca (strain YX)</name>
    <dbReference type="NCBI Taxonomy" id="269800"/>
    <lineage>
        <taxon>Bacteria</taxon>
        <taxon>Bacillati</taxon>
        <taxon>Actinomycetota</taxon>
        <taxon>Actinomycetes</taxon>
        <taxon>Streptosporangiales</taxon>
        <taxon>Nocardiopsidaceae</taxon>
        <taxon>Thermobifida</taxon>
    </lineage>
</organism>
<keyword id="KW-0067">ATP-binding</keyword>
<keyword id="KW-0460">Magnesium</keyword>
<keyword id="KW-0547">Nucleotide-binding</keyword>
<keyword id="KW-0808">Transferase</keyword>
<keyword id="KW-0819">tRNA processing</keyword>
<evidence type="ECO:0000255" key="1">
    <source>
        <dbReference type="HAMAP-Rule" id="MF_00185"/>
    </source>
</evidence>